<feature type="transit peptide" description="Mitochondrion" evidence="2">
    <location>
        <begin position="1"/>
        <end position="38"/>
    </location>
</feature>
<feature type="chain" id="PRO_0000019997" description="NADH dehydrogenase [ubiquinone] iron-sulfur protein 3, mitochondrial">
    <location>
        <begin position="39"/>
        <end position="266"/>
    </location>
</feature>
<feature type="sequence conflict" description="In Ref. 2; AA sequence." evidence="5" ref="2">
    <original>L</original>
    <variation>E</variation>
    <location>
        <position position="254"/>
    </location>
</feature>
<feature type="helix" evidence="7">
    <location>
        <begin position="54"/>
        <end position="70"/>
    </location>
</feature>
<feature type="turn" evidence="7">
    <location>
        <begin position="72"/>
        <end position="74"/>
    </location>
</feature>
<feature type="strand" evidence="7">
    <location>
        <begin position="75"/>
        <end position="80"/>
    </location>
</feature>
<feature type="turn" evidence="8">
    <location>
        <begin position="82"/>
        <end position="84"/>
    </location>
</feature>
<feature type="strand" evidence="7">
    <location>
        <begin position="86"/>
        <end position="90"/>
    </location>
</feature>
<feature type="helix" evidence="7">
    <location>
        <begin position="92"/>
        <end position="94"/>
    </location>
</feature>
<feature type="helix" evidence="7">
    <location>
        <begin position="95"/>
        <end position="104"/>
    </location>
</feature>
<feature type="turn" evidence="7">
    <location>
        <begin position="106"/>
        <end position="108"/>
    </location>
</feature>
<feature type="strand" evidence="7">
    <location>
        <begin position="112"/>
        <end position="120"/>
    </location>
</feature>
<feature type="strand" evidence="7">
    <location>
        <begin position="124"/>
        <end position="126"/>
    </location>
</feature>
<feature type="strand" evidence="7">
    <location>
        <begin position="128"/>
        <end position="136"/>
    </location>
</feature>
<feature type="turn" evidence="7">
    <location>
        <begin position="137"/>
        <end position="140"/>
    </location>
</feature>
<feature type="strand" evidence="7">
    <location>
        <begin position="141"/>
        <end position="149"/>
    </location>
</feature>
<feature type="strand" evidence="9">
    <location>
        <begin position="151"/>
        <end position="153"/>
    </location>
</feature>
<feature type="turn" evidence="7">
    <location>
        <begin position="159"/>
        <end position="161"/>
    </location>
</feature>
<feature type="helix" evidence="7">
    <location>
        <begin position="165"/>
        <end position="176"/>
    </location>
</feature>
<feature type="strand" evidence="8">
    <location>
        <begin position="180"/>
        <end position="182"/>
    </location>
</feature>
<feature type="strand" evidence="7">
    <location>
        <begin position="189"/>
        <end position="191"/>
    </location>
</feature>
<feature type="strand" evidence="7">
    <location>
        <begin position="209"/>
        <end position="215"/>
    </location>
</feature>
<feature type="turn" evidence="7">
    <location>
        <begin position="216"/>
        <end position="219"/>
    </location>
</feature>
<feature type="strand" evidence="7">
    <location>
        <begin position="220"/>
        <end position="225"/>
    </location>
</feature>
<feature type="strand" evidence="7">
    <location>
        <begin position="228"/>
        <end position="230"/>
    </location>
</feature>
<feature type="helix" evidence="7">
    <location>
        <begin position="245"/>
        <end position="247"/>
    </location>
</feature>
<sequence>MAAAVAAAARGCWQRLVGSAAPARVAGRPSVLLLPVRRESSAADTRPTVRPRNDVAHKQLSAFGEYVAEILPKYVQQVQVSCFNELEICIHPDGVIPVLTFLRDHSNAQFKSLADLTAVDIPTRQNRFEIVYNLLSLRFNSRIRVKTYTDELTPIESSVPVYKAANWYEREIWDMFGVFFANHPDLRRILTDYGFEGHPFRKDFPLSGYVELRYDDEVKRVVAEPVELAQEFRKFDLNSPWEAFPAYRQPPESLKLEAGDTKPEAK</sequence>
<dbReference type="EC" id="7.1.1.2" evidence="1"/>
<dbReference type="EMBL" id="M58469">
    <property type="protein sequence ID" value="AAA30663.1"/>
    <property type="status" value="ALT_SEQ"/>
    <property type="molecule type" value="mRNA"/>
</dbReference>
<dbReference type="PIR" id="A37957">
    <property type="entry name" value="A37957"/>
</dbReference>
<dbReference type="RefSeq" id="NP_777244.1">
    <property type="nucleotide sequence ID" value="NM_174819.3"/>
</dbReference>
<dbReference type="PDB" id="5LC5">
    <property type="method" value="EM"/>
    <property type="resolution" value="4.35 A"/>
    <property type="chains" value="C=46-251"/>
</dbReference>
<dbReference type="PDB" id="5LDW">
    <property type="method" value="EM"/>
    <property type="resolution" value="4.27 A"/>
    <property type="chains" value="C=39-266"/>
</dbReference>
<dbReference type="PDB" id="5LDX">
    <property type="method" value="EM"/>
    <property type="resolution" value="5.60 A"/>
    <property type="chains" value="C=39-266"/>
</dbReference>
<dbReference type="PDB" id="5O31">
    <property type="method" value="EM"/>
    <property type="resolution" value="4.13 A"/>
    <property type="chains" value="C=39-266"/>
</dbReference>
<dbReference type="PDB" id="7DGQ">
    <property type="method" value="EM"/>
    <property type="resolution" value="5.00 A"/>
    <property type="chains" value="C=39-266"/>
</dbReference>
<dbReference type="PDB" id="7DGR">
    <property type="method" value="EM"/>
    <property type="resolution" value="4.60 A"/>
    <property type="chains" value="C=39-266"/>
</dbReference>
<dbReference type="PDB" id="7DGS">
    <property type="method" value="EM"/>
    <property type="resolution" value="7.80 A"/>
    <property type="chains" value="C=39-266"/>
</dbReference>
<dbReference type="PDB" id="7DGZ">
    <property type="method" value="EM"/>
    <property type="resolution" value="3.80 A"/>
    <property type="chains" value="C=39-266"/>
</dbReference>
<dbReference type="PDB" id="7DH0">
    <property type="method" value="EM"/>
    <property type="resolution" value="4.20 A"/>
    <property type="chains" value="C=39-266"/>
</dbReference>
<dbReference type="PDB" id="7DKF">
    <property type="method" value="EM"/>
    <property type="resolution" value="8.30 A"/>
    <property type="chains" value="C2=39-266"/>
</dbReference>
<dbReference type="PDB" id="7QSD">
    <property type="method" value="EM"/>
    <property type="resolution" value="3.10 A"/>
    <property type="chains" value="C=1-266"/>
</dbReference>
<dbReference type="PDB" id="7QSK">
    <property type="method" value="EM"/>
    <property type="resolution" value="2.84 A"/>
    <property type="chains" value="C=1-266"/>
</dbReference>
<dbReference type="PDB" id="7QSL">
    <property type="method" value="EM"/>
    <property type="resolution" value="2.76 A"/>
    <property type="chains" value="C=1-266"/>
</dbReference>
<dbReference type="PDB" id="7QSM">
    <property type="method" value="EM"/>
    <property type="resolution" value="2.30 A"/>
    <property type="chains" value="C=1-266"/>
</dbReference>
<dbReference type="PDB" id="7QSN">
    <property type="method" value="EM"/>
    <property type="resolution" value="2.81 A"/>
    <property type="chains" value="C=1-266"/>
</dbReference>
<dbReference type="PDB" id="7QSO">
    <property type="method" value="EM"/>
    <property type="resolution" value="3.02 A"/>
    <property type="chains" value="C=1-266"/>
</dbReference>
<dbReference type="PDB" id="7R41">
    <property type="method" value="EM"/>
    <property type="resolution" value="2.30 A"/>
    <property type="chains" value="C=1-266"/>
</dbReference>
<dbReference type="PDB" id="7R42">
    <property type="method" value="EM"/>
    <property type="resolution" value="2.30 A"/>
    <property type="chains" value="C=1-266"/>
</dbReference>
<dbReference type="PDB" id="7R43">
    <property type="method" value="EM"/>
    <property type="resolution" value="2.40 A"/>
    <property type="chains" value="C=1-266"/>
</dbReference>
<dbReference type="PDB" id="7R44">
    <property type="method" value="EM"/>
    <property type="resolution" value="2.40 A"/>
    <property type="chains" value="C=1-266"/>
</dbReference>
<dbReference type="PDB" id="7R45">
    <property type="method" value="EM"/>
    <property type="resolution" value="2.40 A"/>
    <property type="chains" value="C=1-266"/>
</dbReference>
<dbReference type="PDB" id="7R46">
    <property type="method" value="EM"/>
    <property type="resolution" value="2.40 A"/>
    <property type="chains" value="C=1-266"/>
</dbReference>
<dbReference type="PDB" id="7R47">
    <property type="method" value="EM"/>
    <property type="resolution" value="2.30 A"/>
    <property type="chains" value="C=1-266"/>
</dbReference>
<dbReference type="PDB" id="7R48">
    <property type="method" value="EM"/>
    <property type="resolution" value="2.30 A"/>
    <property type="chains" value="C=1-266"/>
</dbReference>
<dbReference type="PDB" id="7R4C">
    <property type="method" value="EM"/>
    <property type="resolution" value="2.30 A"/>
    <property type="chains" value="C=1-266"/>
</dbReference>
<dbReference type="PDB" id="7R4D">
    <property type="method" value="EM"/>
    <property type="resolution" value="2.30 A"/>
    <property type="chains" value="C=1-266"/>
</dbReference>
<dbReference type="PDB" id="7R4F">
    <property type="method" value="EM"/>
    <property type="resolution" value="2.40 A"/>
    <property type="chains" value="C=1-266"/>
</dbReference>
<dbReference type="PDB" id="7R4G">
    <property type="method" value="EM"/>
    <property type="resolution" value="2.50 A"/>
    <property type="chains" value="C=1-266"/>
</dbReference>
<dbReference type="PDB" id="8Q0A">
    <property type="method" value="EM"/>
    <property type="resolution" value="3.10 A"/>
    <property type="chains" value="C=1-266"/>
</dbReference>
<dbReference type="PDB" id="8Q0F">
    <property type="method" value="EM"/>
    <property type="resolution" value="3.10 A"/>
    <property type="chains" value="C=1-266"/>
</dbReference>
<dbReference type="PDB" id="8Q0J">
    <property type="method" value="EM"/>
    <property type="resolution" value="3.80 A"/>
    <property type="chains" value="C=1-266"/>
</dbReference>
<dbReference type="PDB" id="8Q0M">
    <property type="method" value="EM"/>
    <property type="resolution" value="3.10 A"/>
    <property type="chains" value="C=1-266"/>
</dbReference>
<dbReference type="PDB" id="8Q0O">
    <property type="method" value="EM"/>
    <property type="resolution" value="3.10 A"/>
    <property type="chains" value="C=1-266"/>
</dbReference>
<dbReference type="PDB" id="8Q0Q">
    <property type="method" value="EM"/>
    <property type="resolution" value="3.60 A"/>
    <property type="chains" value="C=1-266"/>
</dbReference>
<dbReference type="PDB" id="8Q1P">
    <property type="method" value="EM"/>
    <property type="resolution" value="2.90 A"/>
    <property type="chains" value="C=1-266"/>
</dbReference>
<dbReference type="PDB" id="8Q1U">
    <property type="method" value="EM"/>
    <property type="resolution" value="3.30 A"/>
    <property type="chains" value="C=1-266"/>
</dbReference>
<dbReference type="PDB" id="8Q1Y">
    <property type="method" value="EM"/>
    <property type="resolution" value="2.60 A"/>
    <property type="chains" value="C=1-266"/>
</dbReference>
<dbReference type="PDB" id="8Q25">
    <property type="method" value="EM"/>
    <property type="resolution" value="2.80 A"/>
    <property type="chains" value="C=1-266"/>
</dbReference>
<dbReference type="PDB" id="8Q45">
    <property type="method" value="EM"/>
    <property type="resolution" value="2.70 A"/>
    <property type="chains" value="C=1-266"/>
</dbReference>
<dbReference type="PDB" id="8Q46">
    <property type="method" value="EM"/>
    <property type="resolution" value="2.60 A"/>
    <property type="chains" value="C=1-266"/>
</dbReference>
<dbReference type="PDB" id="8Q47">
    <property type="method" value="EM"/>
    <property type="resolution" value="2.90 A"/>
    <property type="chains" value="C=1-266"/>
</dbReference>
<dbReference type="PDB" id="8Q48">
    <property type="method" value="EM"/>
    <property type="resolution" value="2.50 A"/>
    <property type="chains" value="C=1-266"/>
</dbReference>
<dbReference type="PDB" id="8Q49">
    <property type="method" value="EM"/>
    <property type="resolution" value="2.60 A"/>
    <property type="chains" value="C=1-266"/>
</dbReference>
<dbReference type="PDB" id="8Q4A">
    <property type="method" value="EM"/>
    <property type="resolution" value="2.60 A"/>
    <property type="chains" value="C=1-266"/>
</dbReference>
<dbReference type="PDBsum" id="5LC5"/>
<dbReference type="PDBsum" id="5LDW"/>
<dbReference type="PDBsum" id="5LDX"/>
<dbReference type="PDBsum" id="5O31"/>
<dbReference type="PDBsum" id="7DGQ"/>
<dbReference type="PDBsum" id="7DGR"/>
<dbReference type="PDBsum" id="7DGS"/>
<dbReference type="PDBsum" id="7DGZ"/>
<dbReference type="PDBsum" id="7DH0"/>
<dbReference type="PDBsum" id="7DKF"/>
<dbReference type="PDBsum" id="7QSD"/>
<dbReference type="PDBsum" id="7QSK"/>
<dbReference type="PDBsum" id="7QSL"/>
<dbReference type="PDBsum" id="7QSM"/>
<dbReference type="PDBsum" id="7QSN"/>
<dbReference type="PDBsum" id="7QSO"/>
<dbReference type="PDBsum" id="7R41"/>
<dbReference type="PDBsum" id="7R42"/>
<dbReference type="PDBsum" id="7R43"/>
<dbReference type="PDBsum" id="7R44"/>
<dbReference type="PDBsum" id="7R45"/>
<dbReference type="PDBsum" id="7R46"/>
<dbReference type="PDBsum" id="7R47"/>
<dbReference type="PDBsum" id="7R48"/>
<dbReference type="PDBsum" id="7R4C"/>
<dbReference type="PDBsum" id="7R4D"/>
<dbReference type="PDBsum" id="7R4F"/>
<dbReference type="PDBsum" id="7R4G"/>
<dbReference type="PDBsum" id="8Q0A"/>
<dbReference type="PDBsum" id="8Q0F"/>
<dbReference type="PDBsum" id="8Q0J"/>
<dbReference type="PDBsum" id="8Q0M"/>
<dbReference type="PDBsum" id="8Q0O"/>
<dbReference type="PDBsum" id="8Q0Q"/>
<dbReference type="PDBsum" id="8Q1P"/>
<dbReference type="PDBsum" id="8Q1U"/>
<dbReference type="PDBsum" id="8Q1Y"/>
<dbReference type="PDBsum" id="8Q25"/>
<dbReference type="PDBsum" id="8Q45"/>
<dbReference type="PDBsum" id="8Q46"/>
<dbReference type="PDBsum" id="8Q47"/>
<dbReference type="PDBsum" id="8Q48"/>
<dbReference type="PDBsum" id="8Q49"/>
<dbReference type="PDBsum" id="8Q4A"/>
<dbReference type="EMDB" id="EMD-14127"/>
<dbReference type="EMDB" id="EMD-14132"/>
<dbReference type="EMDB" id="EMD-14133"/>
<dbReference type="EMDB" id="EMD-14134"/>
<dbReference type="EMDB" id="EMD-14139"/>
<dbReference type="EMDB" id="EMD-14140"/>
<dbReference type="EMDB" id="EMD-14251"/>
<dbReference type="EMDB" id="EMD-14256"/>
<dbReference type="EMDB" id="EMD-14261"/>
<dbReference type="EMDB" id="EMD-14266"/>
<dbReference type="EMDB" id="EMD-14272"/>
<dbReference type="EMDB" id="EMD-14277"/>
<dbReference type="EMDB" id="EMD-14282"/>
<dbReference type="EMDB" id="EMD-14287"/>
<dbReference type="EMDB" id="EMD-14292"/>
<dbReference type="EMDB" id="EMD-14297"/>
<dbReference type="EMDB" id="EMD-14302"/>
<dbReference type="EMDB" id="EMD-14307"/>
<dbReference type="EMDB" id="EMD-18051"/>
<dbReference type="EMDB" id="EMD-18052"/>
<dbReference type="EMDB" id="EMD-18054"/>
<dbReference type="EMDB" id="EMD-18055"/>
<dbReference type="EMDB" id="EMD-18057"/>
<dbReference type="EMDB" id="EMD-18059"/>
<dbReference type="EMDB" id="EMD-18066"/>
<dbReference type="EMDB" id="EMD-18067"/>
<dbReference type="EMDB" id="EMD-18068"/>
<dbReference type="EMDB" id="EMD-18069"/>
<dbReference type="EMDB" id="EMD-18138"/>
<dbReference type="EMDB" id="EMD-18139"/>
<dbReference type="EMDB" id="EMD-18140"/>
<dbReference type="EMDB" id="EMD-18141"/>
<dbReference type="EMDB" id="EMD-18142"/>
<dbReference type="EMDB" id="EMD-18143"/>
<dbReference type="EMDB" id="EMD-30673"/>
<dbReference type="EMDB" id="EMD-30674"/>
<dbReference type="EMDB" id="EMD-30675"/>
<dbReference type="EMDB" id="EMD-30676"/>
<dbReference type="EMDB" id="EMD-30677"/>
<dbReference type="EMDB" id="EMD-30706"/>
<dbReference type="EMDB" id="EMD-3731"/>
<dbReference type="EMDB" id="EMD-4032"/>
<dbReference type="EMDB" id="EMD-4040"/>
<dbReference type="EMDB" id="EMD-4041"/>
<dbReference type="SMR" id="P23709"/>
<dbReference type="CORUM" id="P23709"/>
<dbReference type="DIP" id="DIP-38807N"/>
<dbReference type="FunCoup" id="P23709">
    <property type="interactions" value="1761"/>
</dbReference>
<dbReference type="IntAct" id="P23709">
    <property type="interactions" value="3"/>
</dbReference>
<dbReference type="STRING" id="9913.ENSBTAP00000024600"/>
<dbReference type="TCDB" id="3.D.1.6.1">
    <property type="family name" value="the h+ or na+-translocating nadh dehydrogenase (ndh) family"/>
</dbReference>
<dbReference type="PaxDb" id="9913-ENSBTAP00000024600"/>
<dbReference type="PeptideAtlas" id="P23709"/>
<dbReference type="GeneID" id="287327"/>
<dbReference type="KEGG" id="bta:287327"/>
<dbReference type="CTD" id="4722"/>
<dbReference type="eggNOG" id="KOG1713">
    <property type="taxonomic scope" value="Eukaryota"/>
</dbReference>
<dbReference type="InParanoid" id="P23709"/>
<dbReference type="OrthoDB" id="37721at2759"/>
<dbReference type="Proteomes" id="UP000009136">
    <property type="component" value="Unplaced"/>
</dbReference>
<dbReference type="GO" id="GO:0005743">
    <property type="term" value="C:mitochondrial inner membrane"/>
    <property type="evidence" value="ECO:0000314"/>
    <property type="project" value="UniProtKB"/>
</dbReference>
<dbReference type="GO" id="GO:0031966">
    <property type="term" value="C:mitochondrial membrane"/>
    <property type="evidence" value="ECO:0000250"/>
    <property type="project" value="UniProtKB"/>
</dbReference>
<dbReference type="GO" id="GO:0045271">
    <property type="term" value="C:respiratory chain complex I"/>
    <property type="evidence" value="ECO:0000314"/>
    <property type="project" value="UniProtKB"/>
</dbReference>
<dbReference type="GO" id="GO:0008137">
    <property type="term" value="F:NADH dehydrogenase (ubiquinone) activity"/>
    <property type="evidence" value="ECO:0007669"/>
    <property type="project" value="UniProtKB-EC"/>
</dbReference>
<dbReference type="GO" id="GO:0003954">
    <property type="term" value="F:NADH dehydrogenase activity"/>
    <property type="evidence" value="ECO:0000250"/>
    <property type="project" value="UniProtKB"/>
</dbReference>
<dbReference type="GO" id="GO:0006120">
    <property type="term" value="P:mitochondrial electron transport, NADH to ubiquinone"/>
    <property type="evidence" value="ECO:0000250"/>
    <property type="project" value="UniProtKB"/>
</dbReference>
<dbReference type="GO" id="GO:0032981">
    <property type="term" value="P:mitochondrial respiratory chain complex I assembly"/>
    <property type="evidence" value="ECO:0000250"/>
    <property type="project" value="UniProtKB"/>
</dbReference>
<dbReference type="GO" id="GO:0072593">
    <property type="term" value="P:reactive oxygen species metabolic process"/>
    <property type="evidence" value="ECO:0000250"/>
    <property type="project" value="UniProtKB"/>
</dbReference>
<dbReference type="FunFam" id="3.30.460.80:FF:000002">
    <property type="entry name" value="NADH dehydrogenase iron-sulfur protein 3, mitochondrial"/>
    <property type="match status" value="1"/>
</dbReference>
<dbReference type="Gene3D" id="3.30.460.80">
    <property type="entry name" value="NADH:ubiquinone oxidoreductase, 30kDa subunit"/>
    <property type="match status" value="1"/>
</dbReference>
<dbReference type="HAMAP" id="MF_01357">
    <property type="entry name" value="NDH1_NuoC"/>
    <property type="match status" value="1"/>
</dbReference>
<dbReference type="InterPro" id="IPR010218">
    <property type="entry name" value="NADH_DH_suC"/>
</dbReference>
<dbReference type="InterPro" id="IPR037232">
    <property type="entry name" value="NADH_quin_OxRdtase_su_C/D-like"/>
</dbReference>
<dbReference type="InterPro" id="IPR001268">
    <property type="entry name" value="NADH_UbQ_OxRdtase_30kDa_su"/>
</dbReference>
<dbReference type="InterPro" id="IPR020396">
    <property type="entry name" value="NADH_UbQ_OxRdtase_CS"/>
</dbReference>
<dbReference type="NCBIfam" id="TIGR01961">
    <property type="entry name" value="NuoC_fam"/>
    <property type="match status" value="1"/>
</dbReference>
<dbReference type="NCBIfam" id="NF004733">
    <property type="entry name" value="PRK06074.1-5"/>
    <property type="match status" value="1"/>
</dbReference>
<dbReference type="PANTHER" id="PTHR10884:SF14">
    <property type="entry name" value="NADH DEHYDROGENASE [UBIQUINONE] IRON-SULFUR PROTEIN 3, MITOCHONDRIAL"/>
    <property type="match status" value="1"/>
</dbReference>
<dbReference type="PANTHER" id="PTHR10884">
    <property type="entry name" value="NADH DEHYDROGENASE UBIQUINONE IRON-SULFUR PROTEIN 3"/>
    <property type="match status" value="1"/>
</dbReference>
<dbReference type="Pfam" id="PF00329">
    <property type="entry name" value="Complex1_30kDa"/>
    <property type="match status" value="1"/>
</dbReference>
<dbReference type="SUPFAM" id="SSF143243">
    <property type="entry name" value="Nqo5-like"/>
    <property type="match status" value="1"/>
</dbReference>
<dbReference type="PROSITE" id="PS00542">
    <property type="entry name" value="COMPLEX1_30K"/>
    <property type="match status" value="1"/>
</dbReference>
<comment type="function">
    <text evidence="1 2 3">Core subunit of the mitochondrial membrane respiratory chain NADH dehydrogenase (Complex I) which catalyzes electron transfer from NADH through the respiratory chain, using ubiquinone as an electron acceptor (PubMed:10852722, PubMed:18721790). Essential for the catalytic activity and assembly of complex I (By similarity).</text>
</comment>
<comment type="catalytic activity">
    <reaction evidence="1">
        <text>a ubiquinone + NADH + 5 H(+)(in) = a ubiquinol + NAD(+) + 4 H(+)(out)</text>
        <dbReference type="Rhea" id="RHEA:29091"/>
        <dbReference type="Rhea" id="RHEA-COMP:9565"/>
        <dbReference type="Rhea" id="RHEA-COMP:9566"/>
        <dbReference type="ChEBI" id="CHEBI:15378"/>
        <dbReference type="ChEBI" id="CHEBI:16389"/>
        <dbReference type="ChEBI" id="CHEBI:17976"/>
        <dbReference type="ChEBI" id="CHEBI:57540"/>
        <dbReference type="ChEBI" id="CHEBI:57945"/>
        <dbReference type="EC" id="7.1.1.2"/>
    </reaction>
</comment>
<comment type="subunit">
    <text evidence="1 2 3 4">Core subunit of respiratory chain NADH dehydrogenase (Complex I) which is composed of 45 different subunits (PubMed:10852722, PubMed:18721790, PubMed:25209663). Interacts with NDUFAF3 (By similarity). Interacts with RAB5IF (By similarity). Found in subcomplexes containing subunits NDUFS2, MT-ND1 and NDUFA13 (By similarity).</text>
</comment>
<comment type="subcellular location">
    <subcellularLocation>
        <location evidence="2 3 4">Mitochondrion inner membrane</location>
        <topology evidence="6">Peripheral membrane protein</topology>
        <orientation evidence="6">Matrix side</orientation>
    </subcellularLocation>
</comment>
<comment type="similarity">
    <text evidence="5">Belongs to the complex I 30 kDa subunit family.</text>
</comment>
<accession>P23709</accession>
<reference key="1">
    <citation type="journal article" date="1991" name="Biochemistry">
        <title>The 30-kilodalton subunit of bovine mitochondrial complex I is homologous to a protein coded in chloroplast DNA.</title>
        <authorList>
            <person name="Pilkington S.J."/>
            <person name="Skehel J.M."/>
            <person name="Walker J.E."/>
        </authorList>
    </citation>
    <scope>NUCLEOTIDE SEQUENCE [MRNA]</scope>
    <scope>PARTIAL PROTEIN SEQUENCE</scope>
</reference>
<reference key="2">
    <citation type="journal article" date="1991" name="J. Biochem.">
        <title>The amino acid sequences of two 13 kDa polypeptides and partial amino acid sequence of 30 kDa polypeptide of complex I from bovine heart mitochondria: possible location of iron-sulfur clusters.</title>
        <authorList>
            <person name="Masui R."/>
            <person name="Wakabayashi S."/>
            <person name="Matsubara H."/>
            <person name="Hatefi Y."/>
        </authorList>
    </citation>
    <scope>PROTEIN SEQUENCE OF 59-99 AND 197-266</scope>
    <source>
        <tissue>Heart</tissue>
    </source>
</reference>
<reference key="3">
    <citation type="journal article" date="2000" name="Biochemistry">
        <title>Resolution of the membrane domain of bovine complex I into subcomplexes: implications for the structural organization of the enzyme.</title>
        <authorList>
            <person name="Sazanov L.A."/>
            <person name="Peak-Chew S.Y."/>
            <person name="Fearnley I.M."/>
            <person name="Walker J.E."/>
        </authorList>
    </citation>
    <scope>PARTIAL PROTEIN SEQUENCE</scope>
    <scope>PROTEIN SEQUENCE OF N-TERMINUS</scope>
    <scope>IDENTIFICATION IN COMPLEX I</scope>
    <scope>SUBCELLULAR LOCATION</scope>
    <scope>FUNCTION</scope>
</reference>
<reference key="4">
    <citation type="journal article" date="2008" name="Anal. Biochem.">
        <title>Subunit analysis of bovine heart complex I by reversed-phase high-performance liquid chromatography, electrospray ionization-tandem mass spectrometry, and matrix-assisted laser desorption/ionization-time-of-flight mass spectrometry.</title>
        <authorList>
            <person name="Lemma-Gray P."/>
            <person name="Valusova E."/>
            <person name="Carroll C.A."/>
            <person name="Weintraub S.T."/>
            <person name="Musatov A."/>
            <person name="Robinson N.C."/>
        </authorList>
    </citation>
    <scope>IDENTIFICATION IN COMPLEX I</scope>
    <scope>SUBUNIT</scope>
    <scope>SUBCELLULAR LOCATION</scope>
    <scope>FUNCTION</scope>
</reference>
<reference key="5">
    <citation type="journal article" date="2014" name="Nature">
        <title>Architecture of mammalian respiratory complex I.</title>
        <authorList>
            <person name="Vinothkumar K.R."/>
            <person name="Zhu J."/>
            <person name="Hirst J."/>
        </authorList>
    </citation>
    <scope>SUBUNIT</scope>
    <scope>SUBCELLULAR LOCATION</scope>
    <scope>TOPOLOGY</scope>
</reference>
<name>NDUS3_BOVIN</name>
<proteinExistence type="evidence at protein level"/>
<organism>
    <name type="scientific">Bos taurus</name>
    <name type="common">Bovine</name>
    <dbReference type="NCBI Taxonomy" id="9913"/>
    <lineage>
        <taxon>Eukaryota</taxon>
        <taxon>Metazoa</taxon>
        <taxon>Chordata</taxon>
        <taxon>Craniata</taxon>
        <taxon>Vertebrata</taxon>
        <taxon>Euteleostomi</taxon>
        <taxon>Mammalia</taxon>
        <taxon>Eutheria</taxon>
        <taxon>Laurasiatheria</taxon>
        <taxon>Artiodactyla</taxon>
        <taxon>Ruminantia</taxon>
        <taxon>Pecora</taxon>
        <taxon>Bovidae</taxon>
        <taxon>Bovinae</taxon>
        <taxon>Bos</taxon>
    </lineage>
</organism>
<protein>
    <recommendedName>
        <fullName>NADH dehydrogenase [ubiquinone] iron-sulfur protein 3, mitochondrial</fullName>
        <ecNumber evidence="1">7.1.1.2</ecNumber>
    </recommendedName>
    <alternativeName>
        <fullName>Complex I-30kD</fullName>
        <shortName>CI-30kD</shortName>
    </alternativeName>
    <alternativeName>
        <fullName>NADH-ubiquinone oxidoreductase 30 kDa subunit</fullName>
    </alternativeName>
</protein>
<keyword id="KW-0002">3D-structure</keyword>
<keyword id="KW-0903">Direct protein sequencing</keyword>
<keyword id="KW-0249">Electron transport</keyword>
<keyword id="KW-0472">Membrane</keyword>
<keyword id="KW-0496">Mitochondrion</keyword>
<keyword id="KW-0999">Mitochondrion inner membrane</keyword>
<keyword id="KW-0520">NAD</keyword>
<keyword id="KW-0560">Oxidoreductase</keyword>
<keyword id="KW-1185">Reference proteome</keyword>
<keyword id="KW-0679">Respiratory chain</keyword>
<keyword id="KW-0809">Transit peptide</keyword>
<keyword id="KW-1278">Translocase</keyword>
<keyword id="KW-0813">Transport</keyword>
<keyword id="KW-0830">Ubiquinone</keyword>
<gene>
    <name type="primary">NDUFS3</name>
</gene>
<evidence type="ECO:0000250" key="1">
    <source>
        <dbReference type="UniProtKB" id="O75489"/>
    </source>
</evidence>
<evidence type="ECO:0000269" key="2">
    <source>
    </source>
</evidence>
<evidence type="ECO:0000269" key="3">
    <source>
    </source>
</evidence>
<evidence type="ECO:0000269" key="4">
    <source>
    </source>
</evidence>
<evidence type="ECO:0000305" key="5"/>
<evidence type="ECO:0000305" key="6">
    <source>
    </source>
</evidence>
<evidence type="ECO:0007829" key="7">
    <source>
        <dbReference type="PDB" id="7QSM"/>
    </source>
</evidence>
<evidence type="ECO:0007829" key="8">
    <source>
        <dbReference type="PDB" id="8Q0M"/>
    </source>
</evidence>
<evidence type="ECO:0007829" key="9">
    <source>
        <dbReference type="PDB" id="8Q25"/>
    </source>
</evidence>